<evidence type="ECO:0000255" key="1">
    <source>
        <dbReference type="PROSITE-ProRule" id="PRU00175"/>
    </source>
</evidence>
<evidence type="ECO:0000256" key="2">
    <source>
        <dbReference type="SAM" id="MobiDB-lite"/>
    </source>
</evidence>
<evidence type="ECO:0000269" key="3">
    <source>
    </source>
</evidence>
<evidence type="ECO:0000269" key="4">
    <source>
    </source>
</evidence>
<evidence type="ECO:0000269" key="5">
    <source>
    </source>
</evidence>
<evidence type="ECO:0000269" key="6">
    <source>
    </source>
</evidence>
<evidence type="ECO:0000269" key="7">
    <source>
    </source>
</evidence>
<evidence type="ECO:0000269" key="8">
    <source>
    </source>
</evidence>
<evidence type="ECO:0000269" key="9">
    <source>
    </source>
</evidence>
<evidence type="ECO:0000269" key="10">
    <source>
    </source>
</evidence>
<evidence type="ECO:0000303" key="11">
    <source>
    </source>
</evidence>
<evidence type="ECO:0000305" key="12"/>
<evidence type="ECO:0000305" key="13">
    <source>
    </source>
</evidence>
<evidence type="ECO:0000312" key="14">
    <source>
        <dbReference type="HGNC" id="HGNC:21151"/>
    </source>
</evidence>
<evidence type="ECO:0007744" key="15">
    <source>
        <dbReference type="PDB" id="2N9O"/>
    </source>
</evidence>
<evidence type="ECO:0007744" key="16">
    <source>
        <dbReference type="PDB" id="2N9P"/>
    </source>
</evidence>
<evidence type="ECO:0007744" key="17">
    <source>
    </source>
</evidence>
<evidence type="ECO:0007744" key="18">
    <source>
    </source>
</evidence>
<evidence type="ECO:0007829" key="19">
    <source>
        <dbReference type="PDB" id="2N9O"/>
    </source>
</evidence>
<proteinExistence type="evidence at protein level"/>
<sequence>MAEASPHPGRYFCHCCSVEIVPRLPDYICPRCESGFIEELPEETRSTENGSAPSTAPTDQSRPPLEHVDQHLFTLPQGYGQFAFGIFDDSFEIPTFPPGAQADDGRDPESRRERDHPSRHRYGARQPRARLTTRRATGRHEGVPTLEGIIQQLVNGIITPATIPSLGPWGVLHSNPMDYAWGANGLDAIITQLLNQFENTGPPPADKEKIQALPTVPVTEEHVGSGLECPVCKDDYALGERVRQLPCNHLFHDGCIVPWLEQHDSCPVCRKSLTGQNTATNPPGLTGVSFSSSSSSSSSSSPSNENATSNS</sequence>
<accession>Q9BV68</accession>
<accession>Q9NWX1</accession>
<gene>
    <name evidence="11 14" type="primary">RNF126</name>
</gene>
<name>RN126_HUMAN</name>
<reference key="1">
    <citation type="journal article" date="2004" name="Nat. Genet.">
        <title>Complete sequencing and characterization of 21,243 full-length human cDNAs.</title>
        <authorList>
            <person name="Ota T."/>
            <person name="Suzuki Y."/>
            <person name="Nishikawa T."/>
            <person name="Otsuki T."/>
            <person name="Sugiyama T."/>
            <person name="Irie R."/>
            <person name="Wakamatsu A."/>
            <person name="Hayashi K."/>
            <person name="Sato H."/>
            <person name="Nagai K."/>
            <person name="Kimura K."/>
            <person name="Makita H."/>
            <person name="Sekine M."/>
            <person name="Obayashi M."/>
            <person name="Nishi T."/>
            <person name="Shibahara T."/>
            <person name="Tanaka T."/>
            <person name="Ishii S."/>
            <person name="Yamamoto J."/>
            <person name="Saito K."/>
            <person name="Kawai Y."/>
            <person name="Isono Y."/>
            <person name="Nakamura Y."/>
            <person name="Nagahari K."/>
            <person name="Murakami K."/>
            <person name="Yasuda T."/>
            <person name="Iwayanagi T."/>
            <person name="Wagatsuma M."/>
            <person name="Shiratori A."/>
            <person name="Sudo H."/>
            <person name="Hosoiri T."/>
            <person name="Kaku Y."/>
            <person name="Kodaira H."/>
            <person name="Kondo H."/>
            <person name="Sugawara M."/>
            <person name="Takahashi M."/>
            <person name="Kanda K."/>
            <person name="Yokoi T."/>
            <person name="Furuya T."/>
            <person name="Kikkawa E."/>
            <person name="Omura Y."/>
            <person name="Abe K."/>
            <person name="Kamihara K."/>
            <person name="Katsuta N."/>
            <person name="Sato K."/>
            <person name="Tanikawa M."/>
            <person name="Yamazaki M."/>
            <person name="Ninomiya K."/>
            <person name="Ishibashi T."/>
            <person name="Yamashita H."/>
            <person name="Murakawa K."/>
            <person name="Fujimori K."/>
            <person name="Tanai H."/>
            <person name="Kimata M."/>
            <person name="Watanabe M."/>
            <person name="Hiraoka S."/>
            <person name="Chiba Y."/>
            <person name="Ishida S."/>
            <person name="Ono Y."/>
            <person name="Takiguchi S."/>
            <person name="Watanabe S."/>
            <person name="Yosida M."/>
            <person name="Hotuta T."/>
            <person name="Kusano J."/>
            <person name="Kanehori K."/>
            <person name="Takahashi-Fujii A."/>
            <person name="Hara H."/>
            <person name="Tanase T.-O."/>
            <person name="Nomura Y."/>
            <person name="Togiya S."/>
            <person name="Komai F."/>
            <person name="Hara R."/>
            <person name="Takeuchi K."/>
            <person name="Arita M."/>
            <person name="Imose N."/>
            <person name="Musashino K."/>
            <person name="Yuuki H."/>
            <person name="Oshima A."/>
            <person name="Sasaki N."/>
            <person name="Aotsuka S."/>
            <person name="Yoshikawa Y."/>
            <person name="Matsunawa H."/>
            <person name="Ichihara T."/>
            <person name="Shiohata N."/>
            <person name="Sano S."/>
            <person name="Moriya S."/>
            <person name="Momiyama H."/>
            <person name="Satoh N."/>
            <person name="Takami S."/>
            <person name="Terashima Y."/>
            <person name="Suzuki O."/>
            <person name="Nakagawa S."/>
            <person name="Senoh A."/>
            <person name="Mizoguchi H."/>
            <person name="Goto Y."/>
            <person name="Shimizu F."/>
            <person name="Wakebe H."/>
            <person name="Hishigaki H."/>
            <person name="Watanabe T."/>
            <person name="Sugiyama A."/>
            <person name="Takemoto M."/>
            <person name="Kawakami B."/>
            <person name="Yamazaki M."/>
            <person name="Watanabe K."/>
            <person name="Kumagai A."/>
            <person name="Itakura S."/>
            <person name="Fukuzumi Y."/>
            <person name="Fujimori Y."/>
            <person name="Komiyama M."/>
            <person name="Tashiro H."/>
            <person name="Tanigami A."/>
            <person name="Fujiwara T."/>
            <person name="Ono T."/>
            <person name="Yamada K."/>
            <person name="Fujii Y."/>
            <person name="Ozaki K."/>
            <person name="Hirao M."/>
            <person name="Ohmori Y."/>
            <person name="Kawabata A."/>
            <person name="Hikiji T."/>
            <person name="Kobatake N."/>
            <person name="Inagaki H."/>
            <person name="Ikema Y."/>
            <person name="Okamoto S."/>
            <person name="Okitani R."/>
            <person name="Kawakami T."/>
            <person name="Noguchi S."/>
            <person name="Itoh T."/>
            <person name="Shigeta K."/>
            <person name="Senba T."/>
            <person name="Matsumura K."/>
            <person name="Nakajima Y."/>
            <person name="Mizuno T."/>
            <person name="Morinaga M."/>
            <person name="Sasaki M."/>
            <person name="Togashi T."/>
            <person name="Oyama M."/>
            <person name="Hata H."/>
            <person name="Watanabe M."/>
            <person name="Komatsu T."/>
            <person name="Mizushima-Sugano J."/>
            <person name="Satoh T."/>
            <person name="Shirai Y."/>
            <person name="Takahashi Y."/>
            <person name="Nakagawa K."/>
            <person name="Okumura K."/>
            <person name="Nagase T."/>
            <person name="Nomura N."/>
            <person name="Kikuchi H."/>
            <person name="Masuho Y."/>
            <person name="Yamashita R."/>
            <person name="Nakai K."/>
            <person name="Yada T."/>
            <person name="Nakamura Y."/>
            <person name="Ohara O."/>
            <person name="Isogai T."/>
            <person name="Sugano S."/>
        </authorList>
    </citation>
    <scope>NUCLEOTIDE SEQUENCE [LARGE SCALE MRNA]</scope>
</reference>
<reference key="2">
    <citation type="journal article" date="2004" name="Genome Res.">
        <title>The status, quality, and expansion of the NIH full-length cDNA project: the Mammalian Gene Collection (MGC).</title>
        <authorList>
            <consortium name="The MGC Project Team"/>
        </authorList>
    </citation>
    <scope>NUCLEOTIDE SEQUENCE [LARGE SCALE MRNA]</scope>
    <source>
        <tissue>Brain</tissue>
        <tissue>Placenta</tissue>
    </source>
</reference>
<reference key="3">
    <citation type="journal article" date="2008" name="Mol. Cell">
        <title>Kinase-selective enrichment enables quantitative phosphoproteomics of the kinome across the cell cycle.</title>
        <authorList>
            <person name="Daub H."/>
            <person name="Olsen J.V."/>
            <person name="Bairlein M."/>
            <person name="Gnad F."/>
            <person name="Oppermann F.S."/>
            <person name="Korner R."/>
            <person name="Greff Z."/>
            <person name="Keri G."/>
            <person name="Stemmann O."/>
            <person name="Mann M."/>
        </authorList>
    </citation>
    <scope>IDENTIFICATION BY MASS SPECTROMETRY [LARGE SCALE ANALYSIS]</scope>
    <source>
        <tissue>Cervix carcinoma</tissue>
    </source>
</reference>
<reference key="4">
    <citation type="journal article" date="2010" name="Sci. Signal.">
        <title>Quantitative phosphoproteomics reveals widespread full phosphorylation site occupancy during mitosis.</title>
        <authorList>
            <person name="Olsen J.V."/>
            <person name="Vermeulen M."/>
            <person name="Santamaria A."/>
            <person name="Kumar C."/>
            <person name="Miller M.L."/>
            <person name="Jensen L.J."/>
            <person name="Gnad F."/>
            <person name="Cox J."/>
            <person name="Jensen T.S."/>
            <person name="Nigg E.A."/>
            <person name="Brunak S."/>
            <person name="Mann M."/>
        </authorList>
    </citation>
    <scope>ACETYLATION [LARGE SCALE ANALYSIS] AT ALA-2</scope>
    <scope>PHOSPHORYLATION [LARGE SCALE ANALYSIS] AT SER-5</scope>
    <scope>CLEAVAGE OF INITIATOR METHIONINE [LARGE SCALE ANALYSIS]</scope>
    <scope>IDENTIFICATION BY MASS SPECTROMETRY [LARGE SCALE ANALYSIS]</scope>
    <source>
        <tissue>Cervix carcinoma</tissue>
    </source>
</reference>
<reference key="5">
    <citation type="journal article" date="2013" name="Cancer Res.">
        <title>E3 ubiquitin ligase RNF126 promotes cancer cell proliferation by targeting the tumor suppressor p21 for ubiquitin-mediated degradation.</title>
        <authorList>
            <person name="Zhi X."/>
            <person name="Zhao D."/>
            <person name="Wang Z."/>
            <person name="Zhou Z."/>
            <person name="Wang C."/>
            <person name="Chen W."/>
            <person name="Liu R."/>
            <person name="Chen C."/>
        </authorList>
    </citation>
    <scope>FUNCTION</scope>
    <scope>CATALYTIC ACTIVITY</scope>
    <scope>PATHWAY</scope>
    <scope>INTERACTION WITH CDKN1A</scope>
    <scope>SUBCELLULAR LOCATION</scope>
    <scope>UBIQUITINATION</scope>
    <scope>TISSUE SPECIFICITY</scope>
    <scope>MUTAGENESIS OF 229-CYS--CYS-232</scope>
</reference>
<reference key="6">
    <citation type="journal article" date="2013" name="J. Cell Sci.">
        <title>The E3 ubiquitin ligases RNF126 and Rabring7 regulate endosomal sorting of the epidermal growth factor receptor.</title>
        <authorList>
            <person name="Smith C.J."/>
            <person name="Berry D.M."/>
            <person name="McGlade C.J."/>
        </authorList>
    </citation>
    <scope>FUNCTION</scope>
    <scope>INTERACTION WITH CCDC50; EGFR; FLT3 AND SCAMP3</scope>
</reference>
<reference key="7">
    <citation type="journal article" date="2013" name="J. Proteome Res.">
        <title>Toward a comprehensive characterization of a human cancer cell phosphoproteome.</title>
        <authorList>
            <person name="Zhou H."/>
            <person name="Di Palma S."/>
            <person name="Preisinger C."/>
            <person name="Peng M."/>
            <person name="Polat A.N."/>
            <person name="Heck A.J."/>
            <person name="Mohammed S."/>
        </authorList>
    </citation>
    <scope>PHOSPHORYLATION [LARGE SCALE ANALYSIS] AT SER-5</scope>
    <scope>IDENTIFICATION BY MASS SPECTROMETRY [LARGE SCALE ANALYSIS]</scope>
    <source>
        <tissue>Cervix carcinoma</tissue>
        <tissue>Erythroleukemia</tissue>
    </source>
</reference>
<reference key="8">
    <citation type="journal article" date="2013" name="Proc. Natl. Acad. Sci. U.S.A.">
        <title>Solubility-based genetic screen identifies RING finger protein 126 as an E3 ligase for activation-induced cytidine deaminase.</title>
        <authorList>
            <person name="Delker R.K."/>
            <person name="Zhou Y."/>
            <person name="Strikoudis A."/>
            <person name="Stebbins C.E."/>
            <person name="Papavasiliou F.N."/>
        </authorList>
    </citation>
    <scope>FUNCTION</scope>
    <scope>INTERACTION WITH AICDA</scope>
</reference>
<reference key="9">
    <citation type="journal article" date="2014" name="Exp. Cell Res.">
        <title>The ubiquitin ligase RNF126 regulates the retrograde sorting of the cation-independent mannose 6-phosphate receptor.</title>
        <authorList>
            <person name="Smith C.J."/>
            <person name="McGlade C.J."/>
        </authorList>
    </citation>
    <scope>FUNCTION</scope>
</reference>
<reference key="10">
    <citation type="journal article" date="2014" name="Mol. Cell">
        <title>Cytosolic quality control of mislocalized proteins requires RNF126 recruitment to Bag6.</title>
        <authorList>
            <person name="Rodrigo-Brenni M.C."/>
            <person name="Gutierrez E."/>
            <person name="Hegde R.S."/>
        </authorList>
    </citation>
    <scope>FUNCTION</scope>
    <scope>CATALYTIC ACTIVITY</scope>
    <scope>PATHWAY</scope>
    <scope>INTERACTION WITH BAG6</scope>
</reference>
<reference key="11">
    <citation type="journal article" date="2017" name="Proc. Natl. Acad. Sci. U.S.A.">
        <title>Structural basis for regulation of the nucleo-cytoplasmic distribution of Bag6 by TRC35.</title>
        <authorList>
            <person name="Mock J.Y."/>
            <person name="Xu Y."/>
            <person name="Ye Y."/>
            <person name="Clemons W.M. Jr."/>
        </authorList>
    </citation>
    <scope>FUNCTION</scope>
</reference>
<reference key="12">
    <citation type="journal article" date="2023" name="Adv. Sci.">
        <title>RNF126-mediated MRE11 ubiquitination activates the DNA damage response and confers resistance of triple-negative breast cancer to radiotherapy.</title>
        <authorList>
            <person name="Liu W."/>
            <person name="Zheng M."/>
            <person name="Zhang R."/>
            <person name="Jiang Q."/>
            <person name="Du G."/>
            <person name="Wu Y."/>
            <person name="Yang C."/>
            <person name="Li F."/>
            <person name="Li W."/>
            <person name="Wang L."/>
            <person name="Wu J."/>
            <person name="Shi L."/>
            <person name="Li W."/>
            <person name="Zhang K."/>
            <person name="Zhou Z."/>
            <person name="Liu R."/>
            <person name="Gao Y."/>
            <person name="Huang X."/>
            <person name="Fan S."/>
            <person name="Zhi X."/>
            <person name="Jiang D."/>
            <person name="Chen C."/>
        </authorList>
    </citation>
    <scope>FUNCTION</scope>
    <scope>CATALYTIC ACTIVITY</scope>
    <scope>PATHWAY</scope>
    <scope>MUTAGENESIS OF 229-CYS--CYS-232</scope>
</reference>
<reference evidence="15 16" key="13">
    <citation type="journal article" date="2016" name="Sci. Rep.">
        <title>Structural and functional insights into the E3 ligase, RNF126.</title>
        <authorList>
            <person name="Krysztofinska E.M."/>
            <person name="Martinez-Lumbreras S."/>
            <person name="Thapaliya A."/>
            <person name="Evans N.J."/>
            <person name="High S."/>
            <person name="Isaacson R.L."/>
        </authorList>
    </citation>
    <scope>STRUCTURE BY NMR OF 1-40 IN COMPLEX WITH BAG6 AND ZINC</scope>
    <scope>DOMAIN</scope>
    <scope>INTERACTION WITH BAG6</scope>
    <scope>ZINC-BINDING</scope>
    <scope>MUTAGENESIS OF HIS-14; PHE-36 AND 38-GLU-GLU-39</scope>
</reference>
<feature type="initiator methionine" description="Removed" evidence="17">
    <location>
        <position position="1"/>
    </location>
</feature>
<feature type="chain" id="PRO_0000056093" description="E3 ubiquitin-protein ligase RNF126">
    <location>
        <begin position="2"/>
        <end position="311"/>
    </location>
</feature>
<feature type="zinc finger region" description="C4-type" evidence="8">
    <location>
        <begin position="13"/>
        <end position="32"/>
    </location>
</feature>
<feature type="zinc finger region" description="RING-type" evidence="1">
    <location>
        <begin position="229"/>
        <end position="270"/>
    </location>
</feature>
<feature type="region of interest" description="Required for interaction with BAG6" evidence="7">
    <location>
        <begin position="5"/>
        <end position="100"/>
    </location>
</feature>
<feature type="region of interest" description="Disordered" evidence="2">
    <location>
        <begin position="42"/>
        <end position="64"/>
    </location>
</feature>
<feature type="region of interest" description="Disordered" evidence="2">
    <location>
        <begin position="94"/>
        <end position="132"/>
    </location>
</feature>
<feature type="region of interest" description="Sufficient for interaction with AICDA" evidence="4">
    <location>
        <begin position="200"/>
        <end position="304"/>
    </location>
</feature>
<feature type="region of interest" description="Disordered" evidence="2">
    <location>
        <begin position="277"/>
        <end position="311"/>
    </location>
</feature>
<feature type="compositionally biased region" description="Polar residues" evidence="2">
    <location>
        <begin position="47"/>
        <end position="61"/>
    </location>
</feature>
<feature type="compositionally biased region" description="Basic and acidic residues" evidence="2">
    <location>
        <begin position="103"/>
        <end position="116"/>
    </location>
</feature>
<feature type="compositionally biased region" description="Basic residues" evidence="2">
    <location>
        <begin position="117"/>
        <end position="132"/>
    </location>
</feature>
<feature type="compositionally biased region" description="Low complexity" evidence="2">
    <location>
        <begin position="289"/>
        <end position="311"/>
    </location>
</feature>
<feature type="binding site" evidence="8 15">
    <location>
        <position position="13"/>
    </location>
    <ligand>
        <name>Zn(2+)</name>
        <dbReference type="ChEBI" id="CHEBI:29105"/>
    </ligand>
</feature>
<feature type="binding site" evidence="8 15">
    <location>
        <position position="16"/>
    </location>
    <ligand>
        <name>Zn(2+)</name>
        <dbReference type="ChEBI" id="CHEBI:29105"/>
    </ligand>
</feature>
<feature type="binding site" evidence="8 15">
    <location>
        <position position="29"/>
    </location>
    <ligand>
        <name>Zn(2+)</name>
        <dbReference type="ChEBI" id="CHEBI:29105"/>
    </ligand>
</feature>
<feature type="binding site" evidence="8 15">
    <location>
        <position position="32"/>
    </location>
    <ligand>
        <name>Zn(2+)</name>
        <dbReference type="ChEBI" id="CHEBI:29105"/>
    </ligand>
</feature>
<feature type="modified residue" description="N-acetylalanine" evidence="17">
    <location>
        <position position="2"/>
    </location>
</feature>
<feature type="modified residue" description="Phosphoserine" evidence="17 18">
    <location>
        <position position="5"/>
    </location>
</feature>
<feature type="sequence variant" id="VAR_057217" description="In dbSNP:rs2285751.">
    <original>V</original>
    <variation>M</variation>
    <location>
        <position position="68"/>
    </location>
</feature>
<feature type="mutagenesis site" description="Impaired interaction with BAG6." evidence="8">
    <original>H</original>
    <variation>A</variation>
    <location>
        <position position="14"/>
    </location>
</feature>
<feature type="mutagenesis site" description="Impaired interaction with BAG6." evidence="8">
    <original>F</original>
    <variation>A</variation>
    <location>
        <position position="36"/>
    </location>
</feature>
<feature type="mutagenesis site" description="Impaired interaction with BAG6." evidence="8">
    <original>EE</original>
    <variation>RR</variation>
    <location>
        <begin position="38"/>
        <end position="39"/>
    </location>
</feature>
<feature type="mutagenesis site" description="Loss of E3 ligase activity." evidence="3 10">
    <original>CPVC</original>
    <variation>APVA</variation>
    <location>
        <begin position="229"/>
        <end position="232"/>
    </location>
</feature>
<feature type="strand" evidence="19">
    <location>
        <begin position="11"/>
        <end position="13"/>
    </location>
</feature>
<feature type="turn" evidence="19">
    <location>
        <begin position="14"/>
        <end position="17"/>
    </location>
</feature>
<feature type="strand" evidence="19">
    <location>
        <begin position="18"/>
        <end position="20"/>
    </location>
</feature>
<feature type="turn" evidence="19">
    <location>
        <begin position="24"/>
        <end position="26"/>
    </location>
</feature>
<feature type="turn" evidence="19">
    <location>
        <begin position="30"/>
        <end position="32"/>
    </location>
</feature>
<feature type="strand" evidence="19">
    <location>
        <begin position="37"/>
        <end position="39"/>
    </location>
</feature>
<protein>
    <recommendedName>
        <fullName evidence="12">E3 ubiquitin-protein ligase RNF126</fullName>
        <ecNumber evidence="3 7 10">2.3.2.27</ecNumber>
    </recommendedName>
    <alternativeName>
        <fullName evidence="14">RING finger protein 126</fullName>
    </alternativeName>
</protein>
<dbReference type="EC" id="2.3.2.27" evidence="3 7 10"/>
<dbReference type="EMBL" id="AK000559">
    <property type="protein sequence ID" value="BAA91254.1"/>
    <property type="molecule type" value="mRNA"/>
</dbReference>
<dbReference type="EMBL" id="BC001442">
    <property type="protein sequence ID" value="AAH01442.1"/>
    <property type="status" value="ALT_SEQ"/>
    <property type="molecule type" value="mRNA"/>
</dbReference>
<dbReference type="EMBL" id="BC025374">
    <property type="protein sequence ID" value="AAH25374.1"/>
    <property type="molecule type" value="mRNA"/>
</dbReference>
<dbReference type="CCDS" id="CCDS12039.1"/>
<dbReference type="RefSeq" id="NP_919442.1">
    <property type="nucleotide sequence ID" value="NM_194460.3"/>
</dbReference>
<dbReference type="PDB" id="2N9O">
    <property type="method" value="NMR"/>
    <property type="chains" value="A=1-40"/>
</dbReference>
<dbReference type="PDB" id="2N9P">
    <property type="method" value="NMR"/>
    <property type="chains" value="A=1-40"/>
</dbReference>
<dbReference type="PDBsum" id="2N9O"/>
<dbReference type="PDBsum" id="2N9P"/>
<dbReference type="SMR" id="Q9BV68"/>
<dbReference type="BioGRID" id="120790">
    <property type="interactions" value="148"/>
</dbReference>
<dbReference type="FunCoup" id="Q9BV68">
    <property type="interactions" value="2871"/>
</dbReference>
<dbReference type="IntAct" id="Q9BV68">
    <property type="interactions" value="48"/>
</dbReference>
<dbReference type="MINT" id="Q9BV68"/>
<dbReference type="STRING" id="9606.ENSP00000292363"/>
<dbReference type="GlyGen" id="Q9BV68">
    <property type="glycosylation" value="1 site, 1 O-linked glycan (1 site)"/>
</dbReference>
<dbReference type="iPTMnet" id="Q9BV68"/>
<dbReference type="PhosphoSitePlus" id="Q9BV68"/>
<dbReference type="BioMuta" id="RNF126"/>
<dbReference type="DMDM" id="74762712"/>
<dbReference type="jPOST" id="Q9BV68"/>
<dbReference type="MassIVE" id="Q9BV68"/>
<dbReference type="PaxDb" id="9606-ENSP00000292363"/>
<dbReference type="PeptideAtlas" id="Q9BV68"/>
<dbReference type="Pumba" id="Q9BV68"/>
<dbReference type="Antibodypedia" id="22343">
    <property type="antibodies" value="152 antibodies from 23 providers"/>
</dbReference>
<dbReference type="DNASU" id="55658"/>
<dbReference type="Ensembl" id="ENST00000292363.10">
    <property type="protein sequence ID" value="ENSP00000292363.3"/>
    <property type="gene ID" value="ENSG00000070423.18"/>
</dbReference>
<dbReference type="GeneID" id="55658"/>
<dbReference type="KEGG" id="hsa:55658"/>
<dbReference type="MANE-Select" id="ENST00000292363.10">
    <property type="protein sequence ID" value="ENSP00000292363.3"/>
    <property type="RefSeq nucleotide sequence ID" value="NM_194460.3"/>
    <property type="RefSeq protein sequence ID" value="NP_919442.1"/>
</dbReference>
<dbReference type="UCSC" id="uc010drs.4">
    <property type="organism name" value="human"/>
</dbReference>
<dbReference type="AGR" id="HGNC:21151"/>
<dbReference type="CTD" id="55658"/>
<dbReference type="DisGeNET" id="55658"/>
<dbReference type="GeneCards" id="RNF126"/>
<dbReference type="HGNC" id="HGNC:21151">
    <property type="gene designation" value="RNF126"/>
</dbReference>
<dbReference type="HPA" id="ENSG00000070423">
    <property type="expression patterns" value="Low tissue specificity"/>
</dbReference>
<dbReference type="MIM" id="615177">
    <property type="type" value="gene"/>
</dbReference>
<dbReference type="neXtProt" id="NX_Q9BV68"/>
<dbReference type="OpenTargets" id="ENSG00000070423"/>
<dbReference type="PharmGKB" id="PA134876469"/>
<dbReference type="VEuPathDB" id="HostDB:ENSG00000070423"/>
<dbReference type="eggNOG" id="KOG0800">
    <property type="taxonomic scope" value="Eukaryota"/>
</dbReference>
<dbReference type="GeneTree" id="ENSGT00940000157113"/>
<dbReference type="HOGENOM" id="CLU_034892_0_0_1"/>
<dbReference type="InParanoid" id="Q9BV68"/>
<dbReference type="OMA" id="DERSADN"/>
<dbReference type="OrthoDB" id="8062037at2759"/>
<dbReference type="PAN-GO" id="Q9BV68">
    <property type="GO annotations" value="0 GO annotations based on evolutionary models"/>
</dbReference>
<dbReference type="PhylomeDB" id="Q9BV68"/>
<dbReference type="TreeFam" id="TF317985"/>
<dbReference type="PathwayCommons" id="Q9BV68"/>
<dbReference type="Reactome" id="R-HSA-983168">
    <property type="pathway name" value="Antigen processing: Ubiquitination &amp; Proteasome degradation"/>
</dbReference>
<dbReference type="SignaLink" id="Q9BV68"/>
<dbReference type="SIGNOR" id="Q9BV68"/>
<dbReference type="UniPathway" id="UPA00143"/>
<dbReference type="BioGRID-ORCS" id="55658">
    <property type="hits" value="25 hits in 1207 CRISPR screens"/>
</dbReference>
<dbReference type="ChiTaRS" id="RNF126">
    <property type="organism name" value="human"/>
</dbReference>
<dbReference type="EvolutionaryTrace" id="Q9BV68"/>
<dbReference type="GenomeRNAi" id="55658"/>
<dbReference type="Pharos" id="Q9BV68">
    <property type="development level" value="Tbio"/>
</dbReference>
<dbReference type="PRO" id="PR:Q9BV68"/>
<dbReference type="Proteomes" id="UP000005640">
    <property type="component" value="Chromosome 19"/>
</dbReference>
<dbReference type="RNAct" id="Q9BV68">
    <property type="molecule type" value="protein"/>
</dbReference>
<dbReference type="Bgee" id="ENSG00000070423">
    <property type="expression patterns" value="Expressed in granulocyte and 179 other cell types or tissues"/>
</dbReference>
<dbReference type="ExpressionAtlas" id="Q9BV68">
    <property type="expression patterns" value="baseline and differential"/>
</dbReference>
<dbReference type="GO" id="GO:0005737">
    <property type="term" value="C:cytoplasm"/>
    <property type="evidence" value="ECO:0000314"/>
    <property type="project" value="UniProtKB"/>
</dbReference>
<dbReference type="GO" id="GO:0005829">
    <property type="term" value="C:cytosol"/>
    <property type="evidence" value="ECO:0000314"/>
    <property type="project" value="HPA"/>
</dbReference>
<dbReference type="GO" id="GO:0005654">
    <property type="term" value="C:nucleoplasm"/>
    <property type="evidence" value="ECO:0000314"/>
    <property type="project" value="HPA"/>
</dbReference>
<dbReference type="GO" id="GO:0005634">
    <property type="term" value="C:nucleus"/>
    <property type="evidence" value="ECO:0000314"/>
    <property type="project" value="UniProtKB"/>
</dbReference>
<dbReference type="GO" id="GO:0005154">
    <property type="term" value="F:epidermal growth factor receptor binding"/>
    <property type="evidence" value="ECO:0007669"/>
    <property type="project" value="Ensembl"/>
</dbReference>
<dbReference type="GO" id="GO:0061630">
    <property type="term" value="F:ubiquitin protein ligase activity"/>
    <property type="evidence" value="ECO:0000314"/>
    <property type="project" value="UniProtKB"/>
</dbReference>
<dbReference type="GO" id="GO:0008270">
    <property type="term" value="F:zinc ion binding"/>
    <property type="evidence" value="ECO:0007669"/>
    <property type="project" value="UniProtKB-KW"/>
</dbReference>
<dbReference type="GO" id="GO:0071629">
    <property type="term" value="P:cytoplasm protein quality control by the ubiquitin-proteasome system"/>
    <property type="evidence" value="ECO:0000315"/>
    <property type="project" value="UniProtKB"/>
</dbReference>
<dbReference type="GO" id="GO:0042059">
    <property type="term" value="P:negative regulation of epidermal growth factor receptor signaling pathway"/>
    <property type="evidence" value="ECO:0000315"/>
    <property type="project" value="UniProtKB"/>
</dbReference>
<dbReference type="GO" id="GO:1905168">
    <property type="term" value="P:positive regulation of double-strand break repair via homologous recombination"/>
    <property type="evidence" value="ECO:0000314"/>
    <property type="project" value="UniProtKB"/>
</dbReference>
<dbReference type="GO" id="GO:0043161">
    <property type="term" value="P:proteasome-mediated ubiquitin-dependent protein catabolic process"/>
    <property type="evidence" value="ECO:0000314"/>
    <property type="project" value="UniProtKB"/>
</dbReference>
<dbReference type="GO" id="GO:0044314">
    <property type="term" value="P:protein K27-linked ubiquitination"/>
    <property type="evidence" value="ECO:0000314"/>
    <property type="project" value="UniProtKB"/>
</dbReference>
<dbReference type="GO" id="GO:0035519">
    <property type="term" value="P:protein K29-linked ubiquitination"/>
    <property type="evidence" value="ECO:0000314"/>
    <property type="project" value="UniProtKB"/>
</dbReference>
<dbReference type="GO" id="GO:0070936">
    <property type="term" value="P:protein K48-linked ubiquitination"/>
    <property type="evidence" value="ECO:0000250"/>
    <property type="project" value="UniProtKB"/>
</dbReference>
<dbReference type="GO" id="GO:0070534">
    <property type="term" value="P:protein K63-linked ubiquitination"/>
    <property type="evidence" value="ECO:0000250"/>
    <property type="project" value="UniProtKB"/>
</dbReference>
<dbReference type="GO" id="GO:0006513">
    <property type="term" value="P:protein monoubiquitination"/>
    <property type="evidence" value="ECO:0000314"/>
    <property type="project" value="UniProtKB"/>
</dbReference>
<dbReference type="GO" id="GO:0016567">
    <property type="term" value="P:protein ubiquitination"/>
    <property type="evidence" value="ECO:0000318"/>
    <property type="project" value="GO_Central"/>
</dbReference>
<dbReference type="GO" id="GO:0042127">
    <property type="term" value="P:regulation of cell population proliferation"/>
    <property type="evidence" value="ECO:0000315"/>
    <property type="project" value="UniProtKB"/>
</dbReference>
<dbReference type="GO" id="GO:0042147">
    <property type="term" value="P:retrograde transport, endosome to Golgi"/>
    <property type="evidence" value="ECO:0000315"/>
    <property type="project" value="UniProtKB"/>
</dbReference>
<dbReference type="GO" id="GO:0006511">
    <property type="term" value="P:ubiquitin-dependent protein catabolic process"/>
    <property type="evidence" value="ECO:0000314"/>
    <property type="project" value="UniProtKB"/>
</dbReference>
<dbReference type="GO" id="GO:0043162">
    <property type="term" value="P:ubiquitin-dependent protein catabolic process via the multivesicular body sorting pathway"/>
    <property type="evidence" value="ECO:0000315"/>
    <property type="project" value="UniProtKB"/>
</dbReference>
<dbReference type="FunFam" id="3.30.40.10:FF:000253">
    <property type="entry name" value="E3 ubiquitin-protein ligase RNF126"/>
    <property type="match status" value="1"/>
</dbReference>
<dbReference type="Gene3D" id="3.30.40.10">
    <property type="entry name" value="Zinc/RING finger domain, C3HC4 (zinc finger)"/>
    <property type="match status" value="1"/>
</dbReference>
<dbReference type="InterPro" id="IPR039525">
    <property type="entry name" value="RNF126-like_zinc-ribbon"/>
</dbReference>
<dbReference type="InterPro" id="IPR001841">
    <property type="entry name" value="Znf_RING"/>
</dbReference>
<dbReference type="InterPro" id="IPR013083">
    <property type="entry name" value="Znf_RING/FYVE/PHD"/>
</dbReference>
<dbReference type="PANTHER" id="PTHR15710">
    <property type="entry name" value="E3 UBIQUITIN-PROTEIN LIGASE PRAJA"/>
    <property type="match status" value="1"/>
</dbReference>
<dbReference type="PANTHER" id="PTHR15710:SF21">
    <property type="entry name" value="E3 UBIQUITIN-PROTEIN LIGASE RNF126"/>
    <property type="match status" value="1"/>
</dbReference>
<dbReference type="Pfam" id="PF13639">
    <property type="entry name" value="zf-RING_2"/>
    <property type="match status" value="1"/>
</dbReference>
<dbReference type="Pfam" id="PF14369">
    <property type="entry name" value="Zn_ribbon_19"/>
    <property type="match status" value="1"/>
</dbReference>
<dbReference type="SMART" id="SM00184">
    <property type="entry name" value="RING"/>
    <property type="match status" value="1"/>
</dbReference>
<dbReference type="SUPFAM" id="SSF57850">
    <property type="entry name" value="RING/U-box"/>
    <property type="match status" value="1"/>
</dbReference>
<dbReference type="PROSITE" id="PS50089">
    <property type="entry name" value="ZF_RING_2"/>
    <property type="match status" value="1"/>
</dbReference>
<keyword id="KW-0002">3D-structure</keyword>
<keyword id="KW-0007">Acetylation</keyword>
<keyword id="KW-0963">Cytoplasm</keyword>
<keyword id="KW-0479">Metal-binding</keyword>
<keyword id="KW-0539">Nucleus</keyword>
<keyword id="KW-0597">Phosphoprotein</keyword>
<keyword id="KW-1267">Proteomics identification</keyword>
<keyword id="KW-1185">Reference proteome</keyword>
<keyword id="KW-0808">Transferase</keyword>
<keyword id="KW-0832">Ubl conjugation</keyword>
<keyword id="KW-0833">Ubl conjugation pathway</keyword>
<keyword id="KW-0862">Zinc</keyword>
<keyword id="KW-0863">Zinc-finger</keyword>
<organism>
    <name type="scientific">Homo sapiens</name>
    <name type="common">Human</name>
    <dbReference type="NCBI Taxonomy" id="9606"/>
    <lineage>
        <taxon>Eukaryota</taxon>
        <taxon>Metazoa</taxon>
        <taxon>Chordata</taxon>
        <taxon>Craniata</taxon>
        <taxon>Vertebrata</taxon>
        <taxon>Euteleostomi</taxon>
        <taxon>Mammalia</taxon>
        <taxon>Eutheria</taxon>
        <taxon>Euarchontoglires</taxon>
        <taxon>Primates</taxon>
        <taxon>Haplorrhini</taxon>
        <taxon>Catarrhini</taxon>
        <taxon>Hominidae</taxon>
        <taxon>Homo</taxon>
    </lineage>
</organism>
<comment type="function">
    <text evidence="4 5 6 7 9 10 13">E3 ubiquitin-protein ligase that mediates ubiquitination oF target proteins (PubMed:23277564, PubMed:24275455, PubMed:24981174, PubMed:36563124). Depending on the associated E2 ligase, mediates 'Lys-27'-, 'Lys-29'-, 'Lys-48'- and/or 'Lys-63'-linked polyubiquitination of substrates (PubMed:36563124). Part of a BAG6-dependent quality control process ensuring that proteins of the secretory pathway that are mislocalized to the cytosol are degraded by the proteasome. Probably acts by providing the ubiquitin ligase activity associated with the BAG6 complex and be responsible for ubiquitination of the hydrophobic mislocalized proteins and their targeting to the proteasome (PubMed:24981174, PubMed:29042515). May also play a role in the endosomal recycling of IGF2R, the cation-independent mannose-6-phosphate receptor (PubMed:24275455). May play a role in the endosomal sorting and degradation of several membrane receptors including EGFR, FLT3, MET and CXCR4, by mediating their ubiquitination (PubMed:23418353). By ubiquitinating CDKN1A/p21 and targeting it for degradation, may also promote cell proliferation (PubMed:23026136). May monoubiquitinate AICDA (PubMed:23277564). Acts as a regulator of DNA repair by mediating 'Lys-27'- and 'Lys-29'-linked polyubiquitination of MRE11, thereby promoting the exonuclease activity of MRE11 (PubMed:36563124).</text>
</comment>
<comment type="catalytic activity">
    <reaction evidence="3 7 10">
        <text>S-ubiquitinyl-[E2 ubiquitin-conjugating enzyme]-L-cysteine + [acceptor protein]-L-lysine = [E2 ubiquitin-conjugating enzyme]-L-cysteine + N(6)-ubiquitinyl-[acceptor protein]-L-lysine.</text>
        <dbReference type="EC" id="2.3.2.27"/>
    </reaction>
</comment>
<comment type="pathway">
    <text evidence="3 7 10">Protein modification; protein ubiquitination.</text>
</comment>
<comment type="subunit">
    <text evidence="3 4 5 7 8">Interacts with CCDC50, EGFR, FLT3 and SCAMP3 (PubMed:23418353). Interacts with BAG6 (via ubiquitin-like domain); required for BAG6-dependent ubiquitination of proteins mislocalized to the cytosol (PubMed:24981174, PubMed:27193484). Interacts with CDKN1A (PubMed:23026136). Interacts with AICDA (PubMed:23277564).</text>
</comment>
<comment type="interaction">
    <interactant intactId="EBI-357322">
        <id>Q9BV68</id>
    </interactant>
    <interactant intactId="EBI-347552">
        <id>P46379</id>
        <label>BAG6</label>
    </interactant>
    <organismsDiffer>false</organismsDiffer>
    <experiments>8</experiments>
</comment>
<comment type="interaction">
    <interactant intactId="EBI-357322">
        <id>Q9BV68</id>
    </interactant>
    <interactant intactId="EBI-10988864">
        <id>P46379-2</id>
        <label>BAG6</label>
    </interactant>
    <organismsDiffer>false</organismsDiffer>
    <experiments>4</experiments>
</comment>
<comment type="interaction">
    <interactant intactId="EBI-357322">
        <id>Q9BV68</id>
    </interactant>
    <interactant intactId="EBI-743540">
        <id>P51668</id>
        <label>UBE2D1</label>
    </interactant>
    <organismsDiffer>false</organismsDiffer>
    <experiments>7</experiments>
</comment>
<comment type="interaction">
    <interactant intactId="EBI-357322">
        <id>Q9BV68</id>
    </interactant>
    <interactant intactId="EBI-348268">
        <id>P61077</id>
        <label>UBE2D3</label>
    </interactant>
    <organismsDiffer>false</organismsDiffer>
    <experiments>4</experiments>
</comment>
<comment type="interaction">
    <interactant intactId="EBI-357322">
        <id>Q9BV68</id>
    </interactant>
    <interactant intactId="EBI-745527">
        <id>Q9Y2X8</id>
        <label>UBE2D4</label>
    </interactant>
    <organismsDiffer>false</organismsDiffer>
    <experiments>3</experiments>
</comment>
<comment type="subcellular location">
    <subcellularLocation>
        <location evidence="3">Cytoplasm</location>
    </subcellularLocation>
    <subcellularLocation>
        <location evidence="3">Nucleus</location>
    </subcellularLocation>
</comment>
<comment type="tissue specificity">
    <text evidence="3">Highly expressed in liver and testis.</text>
</comment>
<comment type="domain">
    <text evidence="8">The C4-type zinc finger is required for interaction with BAG6.</text>
</comment>
<comment type="PTM">
    <text evidence="3">Ubiquitinated. May undergo autoubiquitination.</text>
</comment>
<comment type="sequence caution" evidence="12">
    <conflict type="miscellaneous discrepancy">
        <sequence resource="EMBL-CDS" id="AAH01442"/>
    </conflict>
    <text>Aberrant splicing.</text>
</comment>